<sequence>MLCCMRRTKQVEKNEDGDQKIDQDGNKPEDKAHKAATKIQASFRGHIIRKKMKDDKKDDNSEEAVENHKGEAKDEAATTENKTPKTEEPTADGPLEVKKEAISSPAEDKKQEPSSEKPKDTPSEENQASAESESTTKGSTENSPGVDASQAKEESKKADVPEATQDAASEKEQEKAESSQEDVKKDEVEEIKASESAQQDEAVSEEAKPDQENA</sequence>
<name>NEUM_XENLA</name>
<comment type="function">
    <text evidence="3">This protein is associated with nerve growth. It is a major component of the motile 'growth cones' that form the tips of elongating axons. Plays a role in axonal and dendritic filopodia induction (By similarity).</text>
</comment>
<comment type="subunit">
    <text evidence="1">Binds calmodulin with a greater affinity in the absence of Ca(2+) than in its presence.</text>
</comment>
<comment type="subcellular location">
    <subcellularLocation>
        <location evidence="3">Cell membrane</location>
        <topology evidence="3">Peripheral membrane protein</topology>
        <orientation evidence="3">Cytoplasmic side</orientation>
    </subcellularLocation>
    <subcellularLocation>
        <location evidence="3">Cell projection</location>
        <location evidence="3">Growth cone membrane</location>
        <topology evidence="3">Peripheral membrane protein</topology>
        <orientation evidence="3">Cytoplasmic side</orientation>
    </subcellularLocation>
    <subcellularLocation>
        <location evidence="3">Synapse</location>
    </subcellularLocation>
    <subcellularLocation>
        <location evidence="3">Cell projection</location>
        <location evidence="3">Filopodium membrane</location>
        <topology evidence="3">Peripheral membrane protein</topology>
    </subcellularLocation>
</comment>
<comment type="PTM">
    <text evidence="2 3">Palmitoylated (By similarity). Palmitoylation is essential for plasma membrane association (By similarity).</text>
</comment>
<comment type="similarity">
    <text evidence="6">Belongs to the neuromodulin family.</text>
</comment>
<keyword id="KW-0112">Calmodulin-binding</keyword>
<keyword id="KW-1003">Cell membrane</keyword>
<keyword id="KW-0966">Cell projection</keyword>
<keyword id="KW-0217">Developmental protein</keyword>
<keyword id="KW-0221">Differentiation</keyword>
<keyword id="KW-0341">Growth regulation</keyword>
<keyword id="KW-0449">Lipoprotein</keyword>
<keyword id="KW-0472">Membrane</keyword>
<keyword id="KW-0524">Neurogenesis</keyword>
<keyword id="KW-0564">Palmitate</keyword>
<keyword id="KW-0597">Phosphoprotein</keyword>
<keyword id="KW-1185">Reference proteome</keyword>
<keyword id="KW-0770">Synapse</keyword>
<accession>P55860</accession>
<accession>Q5D0C7</accession>
<reference key="1">
    <citation type="journal article" date="1997" name="Neuroscience">
        <title>B-50/growth-associated protein-43, a marker of neural development in Xenopus laevis.</title>
        <authorList>
            <person name="Schrama L.H."/>
            <person name="Lepperdinger G."/>
            <person name="Moritz A."/>
            <person name="van den Engel N.K."/>
            <person name="Marquart A."/>
            <person name="Oestreicher A.B."/>
            <person name="Eggen B.J.L."/>
            <person name="Hage W.J."/>
            <person name="Richter K."/>
            <person name="Destree O.H.J."/>
        </authorList>
    </citation>
    <scope>NUCLEOTIDE SEQUENCE [MRNA]</scope>
</reference>
<reference key="2">
    <citation type="submission" date="2003-01" db="EMBL/GenBank/DDBJ databases">
        <authorList>
            <consortium name="NIH - Xenopus Gene Collection (XGC) project"/>
        </authorList>
    </citation>
    <scope>NUCLEOTIDE SEQUENCE [LARGE SCALE MRNA]</scope>
    <source>
        <tissue>Embryo</tissue>
    </source>
</reference>
<dbReference type="EMBL" id="X87582">
    <property type="protein sequence ID" value="CAA60886.1"/>
    <property type="molecule type" value="mRNA"/>
</dbReference>
<dbReference type="EMBL" id="BC042240">
    <property type="protein sequence ID" value="AAH42240.1"/>
    <property type="molecule type" value="mRNA"/>
</dbReference>
<dbReference type="RefSeq" id="NP_001080338.1">
    <property type="nucleotide sequence ID" value="NM_001086869.1"/>
</dbReference>
<dbReference type="DNASU" id="380030"/>
<dbReference type="GeneID" id="380030"/>
<dbReference type="KEGG" id="xla:380030"/>
<dbReference type="AGR" id="Xenbase:XB-GENE-5899429"/>
<dbReference type="CTD" id="380030"/>
<dbReference type="Xenbase" id="XB-GENE-5899429">
    <property type="gene designation" value="gap43.S"/>
</dbReference>
<dbReference type="OMA" id="TNQAKTP"/>
<dbReference type="OrthoDB" id="9397439at2759"/>
<dbReference type="Proteomes" id="UP000186698">
    <property type="component" value="Chromosome 2S"/>
</dbReference>
<dbReference type="Bgee" id="380030">
    <property type="expression patterns" value="Expressed in brain and 14 other cell types or tissues"/>
</dbReference>
<dbReference type="GO" id="GO:0031527">
    <property type="term" value="C:filopodium membrane"/>
    <property type="evidence" value="ECO:0007669"/>
    <property type="project" value="UniProtKB-SubCell"/>
</dbReference>
<dbReference type="GO" id="GO:0032584">
    <property type="term" value="C:growth cone membrane"/>
    <property type="evidence" value="ECO:0007669"/>
    <property type="project" value="UniProtKB-SubCell"/>
</dbReference>
<dbReference type="GO" id="GO:0045202">
    <property type="term" value="C:synapse"/>
    <property type="evidence" value="ECO:0007669"/>
    <property type="project" value="UniProtKB-SubCell"/>
</dbReference>
<dbReference type="GO" id="GO:0005516">
    <property type="term" value="F:calmodulin binding"/>
    <property type="evidence" value="ECO:0007669"/>
    <property type="project" value="UniProtKB-KW"/>
</dbReference>
<dbReference type="GO" id="GO:0030154">
    <property type="term" value="P:cell differentiation"/>
    <property type="evidence" value="ECO:0007669"/>
    <property type="project" value="UniProtKB-KW"/>
</dbReference>
<dbReference type="GO" id="GO:0007399">
    <property type="term" value="P:nervous system development"/>
    <property type="evidence" value="ECO:0007669"/>
    <property type="project" value="UniProtKB-KW"/>
</dbReference>
<dbReference type="GO" id="GO:0040008">
    <property type="term" value="P:regulation of growth"/>
    <property type="evidence" value="ECO:0007669"/>
    <property type="project" value="InterPro"/>
</dbReference>
<dbReference type="Gene3D" id="1.20.5.190">
    <property type="match status" value="1"/>
</dbReference>
<dbReference type="InterPro" id="IPR000048">
    <property type="entry name" value="IQ_motif_EF-hand-BS"/>
</dbReference>
<dbReference type="InterPro" id="IPR001422">
    <property type="entry name" value="Neuromodulin"/>
</dbReference>
<dbReference type="InterPro" id="IPR017454">
    <property type="entry name" value="Neuromodulin_C"/>
</dbReference>
<dbReference type="InterPro" id="IPR018947">
    <property type="entry name" value="Neuromodulin_gap-junction_N"/>
</dbReference>
<dbReference type="InterPro" id="IPR033137">
    <property type="entry name" value="Neuromodulin_P_site"/>
</dbReference>
<dbReference type="InterPro" id="IPR018243">
    <property type="entry name" value="Neuromodulin_palmitoyl_site"/>
</dbReference>
<dbReference type="Pfam" id="PF00612">
    <property type="entry name" value="IQ"/>
    <property type="match status" value="1"/>
</dbReference>
<dbReference type="Pfam" id="PF06614">
    <property type="entry name" value="Neuromodulin"/>
    <property type="match status" value="1"/>
</dbReference>
<dbReference type="Pfam" id="PF10580">
    <property type="entry name" value="Neuromodulin_N"/>
    <property type="match status" value="1"/>
</dbReference>
<dbReference type="PRINTS" id="PR00215">
    <property type="entry name" value="NEUROMODULIN"/>
</dbReference>
<dbReference type="SMART" id="SM00015">
    <property type="entry name" value="IQ"/>
    <property type="match status" value="1"/>
</dbReference>
<dbReference type="PROSITE" id="PS50096">
    <property type="entry name" value="IQ"/>
    <property type="match status" value="1"/>
</dbReference>
<dbReference type="PROSITE" id="PS00412">
    <property type="entry name" value="NEUROMODULIN_1"/>
    <property type="match status" value="1"/>
</dbReference>
<dbReference type="PROSITE" id="PS00413">
    <property type="entry name" value="NEUROMODULIN_2"/>
    <property type="match status" value="1"/>
</dbReference>
<evidence type="ECO:0000250" key="1"/>
<evidence type="ECO:0000250" key="2">
    <source>
        <dbReference type="UniProtKB" id="P06837"/>
    </source>
</evidence>
<evidence type="ECO:0000250" key="3">
    <source>
        <dbReference type="UniProtKB" id="P17677"/>
    </source>
</evidence>
<evidence type="ECO:0000255" key="4">
    <source>
        <dbReference type="PROSITE-ProRule" id="PRU00116"/>
    </source>
</evidence>
<evidence type="ECO:0000256" key="5">
    <source>
        <dbReference type="SAM" id="MobiDB-lite"/>
    </source>
</evidence>
<evidence type="ECO:0000305" key="6"/>
<organism>
    <name type="scientific">Xenopus laevis</name>
    <name type="common">African clawed frog</name>
    <dbReference type="NCBI Taxonomy" id="8355"/>
    <lineage>
        <taxon>Eukaryota</taxon>
        <taxon>Metazoa</taxon>
        <taxon>Chordata</taxon>
        <taxon>Craniata</taxon>
        <taxon>Vertebrata</taxon>
        <taxon>Euteleostomi</taxon>
        <taxon>Amphibia</taxon>
        <taxon>Batrachia</taxon>
        <taxon>Anura</taxon>
        <taxon>Pipoidea</taxon>
        <taxon>Pipidae</taxon>
        <taxon>Xenopodinae</taxon>
        <taxon>Xenopus</taxon>
        <taxon>Xenopus</taxon>
    </lineage>
</organism>
<gene>
    <name type="primary">gap43</name>
</gene>
<proteinExistence type="evidence at transcript level"/>
<protein>
    <recommendedName>
        <fullName>Neuromodulin</fullName>
    </recommendedName>
    <alternativeName>
        <fullName>Axonal membrane protein GAP-43</fullName>
    </alternativeName>
    <alternativeName>
        <fullName>Growth-associated protein 43</fullName>
    </alternativeName>
</protein>
<feature type="chain" id="PRO_0000159603" description="Neuromodulin">
    <location>
        <begin position="1"/>
        <end position="214"/>
    </location>
</feature>
<feature type="domain" description="IQ" evidence="4">
    <location>
        <begin position="32"/>
        <end position="61"/>
    </location>
</feature>
<feature type="region of interest" description="Disordered" evidence="5">
    <location>
        <begin position="1"/>
        <end position="214"/>
    </location>
</feature>
<feature type="compositionally biased region" description="Basic and acidic residues" evidence="5">
    <location>
        <begin position="9"/>
        <end position="33"/>
    </location>
</feature>
<feature type="compositionally biased region" description="Basic and acidic residues" evidence="5">
    <location>
        <begin position="52"/>
        <end position="88"/>
    </location>
</feature>
<feature type="compositionally biased region" description="Basic and acidic residues" evidence="5">
    <location>
        <begin position="95"/>
        <end position="122"/>
    </location>
</feature>
<feature type="compositionally biased region" description="Low complexity" evidence="5">
    <location>
        <begin position="124"/>
        <end position="133"/>
    </location>
</feature>
<feature type="compositionally biased region" description="Basic and acidic residues" evidence="5">
    <location>
        <begin position="150"/>
        <end position="160"/>
    </location>
</feature>
<feature type="compositionally biased region" description="Basic and acidic residues" evidence="5">
    <location>
        <begin position="168"/>
        <end position="193"/>
    </location>
</feature>
<feature type="compositionally biased region" description="Basic and acidic residues" evidence="5">
    <location>
        <begin position="205"/>
        <end position="214"/>
    </location>
</feature>
<feature type="lipid moiety-binding region" description="S-palmitoyl cysteine" evidence="2">
    <location>
        <position position="3"/>
    </location>
</feature>
<feature type="lipid moiety-binding region" description="S-palmitoyl cysteine" evidence="2">
    <location>
        <position position="4"/>
    </location>
</feature>